<feature type="chain" id="PRO_0000135689" description="Pyridoxal 5'-phosphate synthase subunit PdxT">
    <location>
        <begin position="1"/>
        <end position="196"/>
    </location>
</feature>
<feature type="active site" description="Nucleophile" evidence="1">
    <location>
        <position position="84"/>
    </location>
</feature>
<feature type="active site" description="Charge relay system" evidence="1">
    <location>
        <position position="178"/>
    </location>
</feature>
<feature type="active site" description="Charge relay system" evidence="1">
    <location>
        <position position="180"/>
    </location>
</feature>
<feature type="binding site" evidence="1">
    <location>
        <begin position="52"/>
        <end position="54"/>
    </location>
    <ligand>
        <name>L-glutamine</name>
        <dbReference type="ChEBI" id="CHEBI:58359"/>
    </ligand>
</feature>
<feature type="binding site" evidence="1">
    <location>
        <position position="113"/>
    </location>
    <ligand>
        <name>L-glutamine</name>
        <dbReference type="ChEBI" id="CHEBI:58359"/>
    </ligand>
</feature>
<feature type="binding site" evidence="1">
    <location>
        <begin position="141"/>
        <end position="142"/>
    </location>
    <ligand>
        <name>L-glutamine</name>
        <dbReference type="ChEBI" id="CHEBI:58359"/>
    </ligand>
</feature>
<gene>
    <name evidence="1" type="primary">pdxT</name>
    <name type="ordered locus">PH1354</name>
</gene>
<proteinExistence type="inferred from homology"/>
<accession>O59079</accession>
<protein>
    <recommendedName>
        <fullName evidence="1">Pyridoxal 5'-phosphate synthase subunit PdxT</fullName>
        <ecNumber evidence="1">4.3.3.6</ecNumber>
    </recommendedName>
    <alternativeName>
        <fullName evidence="1">Pdx2</fullName>
    </alternativeName>
    <alternativeName>
        <fullName evidence="1">Pyridoxal 5'-phosphate synthase glutaminase subunit</fullName>
        <ecNumber evidence="1">3.5.1.2</ecNumber>
    </alternativeName>
</protein>
<comment type="function">
    <text evidence="1">Catalyzes the hydrolysis of glutamine to glutamate and ammonia as part of the biosynthesis of pyridoxal 5'-phosphate. The resulting ammonia molecule is channeled to the active site of PdxS.</text>
</comment>
<comment type="catalytic activity">
    <reaction evidence="1">
        <text>aldehydo-D-ribose 5-phosphate + D-glyceraldehyde 3-phosphate + L-glutamine = pyridoxal 5'-phosphate + L-glutamate + phosphate + 3 H2O + H(+)</text>
        <dbReference type="Rhea" id="RHEA:31507"/>
        <dbReference type="ChEBI" id="CHEBI:15377"/>
        <dbReference type="ChEBI" id="CHEBI:15378"/>
        <dbReference type="ChEBI" id="CHEBI:29985"/>
        <dbReference type="ChEBI" id="CHEBI:43474"/>
        <dbReference type="ChEBI" id="CHEBI:58273"/>
        <dbReference type="ChEBI" id="CHEBI:58359"/>
        <dbReference type="ChEBI" id="CHEBI:59776"/>
        <dbReference type="ChEBI" id="CHEBI:597326"/>
        <dbReference type="EC" id="4.3.3.6"/>
    </reaction>
</comment>
<comment type="catalytic activity">
    <reaction evidence="1">
        <text>L-glutamine + H2O = L-glutamate + NH4(+)</text>
        <dbReference type="Rhea" id="RHEA:15889"/>
        <dbReference type="ChEBI" id="CHEBI:15377"/>
        <dbReference type="ChEBI" id="CHEBI:28938"/>
        <dbReference type="ChEBI" id="CHEBI:29985"/>
        <dbReference type="ChEBI" id="CHEBI:58359"/>
        <dbReference type="EC" id="3.5.1.2"/>
    </reaction>
</comment>
<comment type="pathway">
    <text evidence="1">Cofactor biosynthesis; pyridoxal 5'-phosphate biosynthesis.</text>
</comment>
<comment type="subunit">
    <text evidence="1">In the presence of PdxS, forms a dodecamer of heterodimers. Only shows activity in the heterodimer.</text>
</comment>
<comment type="similarity">
    <text evidence="1">Belongs to the glutaminase PdxT/SNO family.</text>
</comment>
<name>PDXT_PYRHO</name>
<evidence type="ECO:0000255" key="1">
    <source>
        <dbReference type="HAMAP-Rule" id="MF_01615"/>
    </source>
</evidence>
<sequence length="196" mass="21916">MKVGVVGLQGDVSEHIEATKMAIEKLELPGEVIWLKRPEQLKGVDAVIIPGGESTTISRLMQRTGLFEPIKKMVEDGLPVMGTCAGLIMLAKEVLGATPEQKFLEVLDVKVNRNAYGRQVDSFEAPVKLAFDDEPFIGVFIRAPRIVELLSEKVKPLAWLEDRVVGVEQENIIGLEFHPELTNDTRIHEYFLRKVI</sequence>
<dbReference type="EC" id="4.3.3.6" evidence="1"/>
<dbReference type="EC" id="3.5.1.2" evidence="1"/>
<dbReference type="EMBL" id="BA000001">
    <property type="protein sequence ID" value="BAA30460.1"/>
    <property type="molecule type" value="Genomic_DNA"/>
</dbReference>
<dbReference type="PIR" id="D71007">
    <property type="entry name" value="D71007"/>
</dbReference>
<dbReference type="RefSeq" id="WP_010885442.1">
    <property type="nucleotide sequence ID" value="NC_000961.1"/>
</dbReference>
<dbReference type="SMR" id="O59079"/>
<dbReference type="IntAct" id="O59079">
    <property type="interactions" value="1"/>
</dbReference>
<dbReference type="MINT" id="O59079"/>
<dbReference type="STRING" id="70601.gene:9378330"/>
<dbReference type="MEROPS" id="C26.A32"/>
<dbReference type="EnsemblBacteria" id="BAA30460">
    <property type="protein sequence ID" value="BAA30460"/>
    <property type="gene ID" value="BAA30460"/>
</dbReference>
<dbReference type="GeneID" id="1443679"/>
<dbReference type="KEGG" id="pho:PH1354"/>
<dbReference type="eggNOG" id="arCOG00034">
    <property type="taxonomic scope" value="Archaea"/>
</dbReference>
<dbReference type="OrthoDB" id="26717at2157"/>
<dbReference type="UniPathway" id="UPA00245"/>
<dbReference type="Proteomes" id="UP000000752">
    <property type="component" value="Chromosome"/>
</dbReference>
<dbReference type="GO" id="GO:0005829">
    <property type="term" value="C:cytosol"/>
    <property type="evidence" value="ECO:0007669"/>
    <property type="project" value="TreeGrafter"/>
</dbReference>
<dbReference type="GO" id="GO:1903600">
    <property type="term" value="C:glutaminase complex"/>
    <property type="evidence" value="ECO:0007669"/>
    <property type="project" value="TreeGrafter"/>
</dbReference>
<dbReference type="GO" id="GO:0004359">
    <property type="term" value="F:glutaminase activity"/>
    <property type="evidence" value="ECO:0007669"/>
    <property type="project" value="UniProtKB-UniRule"/>
</dbReference>
<dbReference type="GO" id="GO:0036381">
    <property type="term" value="F:pyridoxal 5'-phosphate synthase (glutamine hydrolysing) activity"/>
    <property type="evidence" value="ECO:0007669"/>
    <property type="project" value="UniProtKB-UniRule"/>
</dbReference>
<dbReference type="GO" id="GO:0006543">
    <property type="term" value="P:glutamine catabolic process"/>
    <property type="evidence" value="ECO:0007669"/>
    <property type="project" value="UniProtKB-UniRule"/>
</dbReference>
<dbReference type="GO" id="GO:0042823">
    <property type="term" value="P:pyridoxal phosphate biosynthetic process"/>
    <property type="evidence" value="ECO:0007669"/>
    <property type="project" value="UniProtKB-UniRule"/>
</dbReference>
<dbReference type="GO" id="GO:0008614">
    <property type="term" value="P:pyridoxine metabolic process"/>
    <property type="evidence" value="ECO:0007669"/>
    <property type="project" value="TreeGrafter"/>
</dbReference>
<dbReference type="CDD" id="cd01749">
    <property type="entry name" value="GATase1_PB"/>
    <property type="match status" value="1"/>
</dbReference>
<dbReference type="FunFam" id="3.40.50.880:FF:000041">
    <property type="entry name" value="Glutamine amidotransferase subunit pdxT, putative"/>
    <property type="match status" value="1"/>
</dbReference>
<dbReference type="Gene3D" id="3.40.50.880">
    <property type="match status" value="1"/>
</dbReference>
<dbReference type="HAMAP" id="MF_01615">
    <property type="entry name" value="PdxT"/>
    <property type="match status" value="1"/>
</dbReference>
<dbReference type="InterPro" id="IPR029062">
    <property type="entry name" value="Class_I_gatase-like"/>
</dbReference>
<dbReference type="InterPro" id="IPR002161">
    <property type="entry name" value="PdxT/SNO"/>
</dbReference>
<dbReference type="InterPro" id="IPR021196">
    <property type="entry name" value="PdxT/SNO_CS"/>
</dbReference>
<dbReference type="NCBIfam" id="TIGR03800">
    <property type="entry name" value="PLP_synth_Pdx2"/>
    <property type="match status" value="1"/>
</dbReference>
<dbReference type="PANTHER" id="PTHR31559">
    <property type="entry name" value="PYRIDOXAL 5'-PHOSPHATE SYNTHASE SUBUNIT SNO"/>
    <property type="match status" value="1"/>
</dbReference>
<dbReference type="PANTHER" id="PTHR31559:SF0">
    <property type="entry name" value="PYRIDOXAL 5'-PHOSPHATE SYNTHASE SUBUNIT SNO1-RELATED"/>
    <property type="match status" value="1"/>
</dbReference>
<dbReference type="Pfam" id="PF01174">
    <property type="entry name" value="SNO"/>
    <property type="match status" value="1"/>
</dbReference>
<dbReference type="PIRSF" id="PIRSF005639">
    <property type="entry name" value="Glut_amidoT_SNO"/>
    <property type="match status" value="1"/>
</dbReference>
<dbReference type="SUPFAM" id="SSF52317">
    <property type="entry name" value="Class I glutamine amidotransferase-like"/>
    <property type="match status" value="1"/>
</dbReference>
<dbReference type="PROSITE" id="PS01236">
    <property type="entry name" value="PDXT_SNO_1"/>
    <property type="match status" value="1"/>
</dbReference>
<dbReference type="PROSITE" id="PS51130">
    <property type="entry name" value="PDXT_SNO_2"/>
    <property type="match status" value="1"/>
</dbReference>
<reference key="1">
    <citation type="journal article" date="1998" name="DNA Res.">
        <title>Complete sequence and gene organization of the genome of a hyper-thermophilic archaebacterium, Pyrococcus horikoshii OT3.</title>
        <authorList>
            <person name="Kawarabayasi Y."/>
            <person name="Sawada M."/>
            <person name="Horikawa H."/>
            <person name="Haikawa Y."/>
            <person name="Hino Y."/>
            <person name="Yamamoto S."/>
            <person name="Sekine M."/>
            <person name="Baba S."/>
            <person name="Kosugi H."/>
            <person name="Hosoyama A."/>
            <person name="Nagai Y."/>
            <person name="Sakai M."/>
            <person name="Ogura K."/>
            <person name="Otsuka R."/>
            <person name="Nakazawa H."/>
            <person name="Takamiya M."/>
            <person name="Ohfuku Y."/>
            <person name="Funahashi T."/>
            <person name="Tanaka T."/>
            <person name="Kudoh Y."/>
            <person name="Yamazaki J."/>
            <person name="Kushida N."/>
            <person name="Oguchi A."/>
            <person name="Aoki K."/>
            <person name="Yoshizawa T."/>
            <person name="Nakamura Y."/>
            <person name="Robb F.T."/>
            <person name="Horikoshi K."/>
            <person name="Masuchi Y."/>
            <person name="Shizuya H."/>
            <person name="Kikuchi H."/>
        </authorList>
    </citation>
    <scope>NUCLEOTIDE SEQUENCE [LARGE SCALE GENOMIC DNA]</scope>
    <source>
        <strain>ATCC 700860 / DSM 12428 / JCM 9974 / NBRC 100139 / OT-3</strain>
    </source>
</reference>
<keyword id="KW-0315">Glutamine amidotransferase</keyword>
<keyword id="KW-0378">Hydrolase</keyword>
<keyword id="KW-0456">Lyase</keyword>
<keyword id="KW-0663">Pyridoxal phosphate</keyword>
<organism>
    <name type="scientific">Pyrococcus horikoshii (strain ATCC 700860 / DSM 12428 / JCM 9974 / NBRC 100139 / OT-3)</name>
    <dbReference type="NCBI Taxonomy" id="70601"/>
    <lineage>
        <taxon>Archaea</taxon>
        <taxon>Methanobacteriati</taxon>
        <taxon>Methanobacteriota</taxon>
        <taxon>Thermococci</taxon>
        <taxon>Thermococcales</taxon>
        <taxon>Thermococcaceae</taxon>
        <taxon>Pyrococcus</taxon>
    </lineage>
</organism>